<organism>
    <name type="scientific">Pinus luchuensis</name>
    <name type="common">Ryukyu island pine</name>
    <dbReference type="NCBI Taxonomy" id="29805"/>
    <lineage>
        <taxon>Eukaryota</taxon>
        <taxon>Viridiplantae</taxon>
        <taxon>Streptophyta</taxon>
        <taxon>Embryophyta</taxon>
        <taxon>Tracheophyta</taxon>
        <taxon>Spermatophyta</taxon>
        <taxon>Pinopsida</taxon>
        <taxon>Pinidae</taxon>
        <taxon>Conifers I</taxon>
        <taxon>Pinales</taxon>
        <taxon>Pinaceae</taxon>
        <taxon>Pinus</taxon>
        <taxon>Pinus subgen. Pinus</taxon>
    </lineage>
</organism>
<keyword id="KW-0150">Chloroplast</keyword>
<keyword id="KW-0507">mRNA processing</keyword>
<keyword id="KW-0934">Plastid</keyword>
<keyword id="KW-0694">RNA-binding</keyword>
<keyword id="KW-0819">tRNA processing</keyword>
<feature type="chain" id="PRO_0000143617" description="Maturase K">
    <location>
        <begin position="1"/>
        <end position="515"/>
    </location>
</feature>
<proteinExistence type="inferred from homology"/>
<sequence>MDEFHRCGKEDSFWQQCFLYPLFFQEDLYAISHDHYLDVSSSSRPMEHLSSNDQLSFLTVKRLIGQIRQQNHSIVLFVNCDPNPLADRKKSFYSESVLEALTLVLEVPFSIWSKSSVEGMNECKSFRSIHSIFPFLEDKFPHSNSILDARIPYSIHPEILVRTFRRWIRDAPSLHPLRSVLYDYRNSPENLQRSIIVVPRVNTRFFLFLLNYYVCECESILFSRLKRSSHSRSLSHGSFPQRTHFHRKIKHIIIFSRRNSLKSIWSLKDPKIHYVRYGERPIIAIKGADLLVKKCRYYLLIFRQFYFHLWSEPYRVCSHQLSKNCSSSPGYFLRVRMNPLLVRTKTLDELFIPVLITNEMDPIVPIVPIIGLLATEKFCDISGRPISKLSWTSLTDDDILDRFDQIWRNLFHYYSGSFDRDGLYRIKYILLLSCAKTLACKHKSTIRVVRKELGPELFKKSFSKEREFDSLPFSSKAAARSQRERIWHSDIPQINPLANSWQKIQDLKIENLFDQ</sequence>
<gene>
    <name evidence="1" type="primary">matK</name>
</gene>
<comment type="function">
    <text evidence="1">Usually encoded in the trnK tRNA gene intron. Probably assists in splicing its own and other chloroplast group II introns.</text>
</comment>
<comment type="subcellular location">
    <subcellularLocation>
        <location>Plastid</location>
        <location>Chloroplast</location>
    </subcellularLocation>
</comment>
<comment type="similarity">
    <text evidence="1">Belongs to the intron maturase 2 family. MatK subfamily.</text>
</comment>
<evidence type="ECO:0000255" key="1">
    <source>
        <dbReference type="HAMAP-Rule" id="MF_01390"/>
    </source>
</evidence>
<protein>
    <recommendedName>
        <fullName evidence="1">Maturase K</fullName>
    </recommendedName>
    <alternativeName>
        <fullName evidence="1">Intron maturase</fullName>
    </alternativeName>
</protein>
<accession>Q76IH5</accession>
<dbReference type="EMBL" id="AB097780">
    <property type="protein sequence ID" value="BAC77423.1"/>
    <property type="molecule type" value="Genomic_DNA"/>
</dbReference>
<dbReference type="GO" id="GO:0009507">
    <property type="term" value="C:chloroplast"/>
    <property type="evidence" value="ECO:0007669"/>
    <property type="project" value="UniProtKB-SubCell"/>
</dbReference>
<dbReference type="GO" id="GO:0003723">
    <property type="term" value="F:RNA binding"/>
    <property type="evidence" value="ECO:0007669"/>
    <property type="project" value="UniProtKB-KW"/>
</dbReference>
<dbReference type="GO" id="GO:0006397">
    <property type="term" value="P:mRNA processing"/>
    <property type="evidence" value="ECO:0007669"/>
    <property type="project" value="UniProtKB-KW"/>
</dbReference>
<dbReference type="GO" id="GO:0008380">
    <property type="term" value="P:RNA splicing"/>
    <property type="evidence" value="ECO:0007669"/>
    <property type="project" value="UniProtKB-UniRule"/>
</dbReference>
<dbReference type="GO" id="GO:0008033">
    <property type="term" value="P:tRNA processing"/>
    <property type="evidence" value="ECO:0007669"/>
    <property type="project" value="UniProtKB-KW"/>
</dbReference>
<dbReference type="HAMAP" id="MF_01390">
    <property type="entry name" value="MatK"/>
    <property type="match status" value="1"/>
</dbReference>
<dbReference type="InterPro" id="IPR024937">
    <property type="entry name" value="Domain_X"/>
</dbReference>
<dbReference type="InterPro" id="IPR002866">
    <property type="entry name" value="Maturase_MatK"/>
</dbReference>
<dbReference type="InterPro" id="IPR024942">
    <property type="entry name" value="Maturase_MatK_N"/>
</dbReference>
<dbReference type="PANTHER" id="PTHR34811">
    <property type="entry name" value="MATURASE K"/>
    <property type="match status" value="1"/>
</dbReference>
<dbReference type="PANTHER" id="PTHR34811:SF1">
    <property type="entry name" value="MATURASE K"/>
    <property type="match status" value="1"/>
</dbReference>
<dbReference type="Pfam" id="PF01348">
    <property type="entry name" value="Intron_maturas2"/>
    <property type="match status" value="1"/>
</dbReference>
<dbReference type="Pfam" id="PF01824">
    <property type="entry name" value="MatK_N"/>
    <property type="match status" value="1"/>
</dbReference>
<reference key="1">
    <citation type="submission" date="2002-12" db="EMBL/GenBank/DDBJ databases">
        <title>Evolutionary relationships in Pines.</title>
        <authorList>
            <person name="Geada-Lopez G."/>
            <person name="Harada K."/>
        </authorList>
    </citation>
    <scope>NUCLEOTIDE SEQUENCE [GENOMIC DNA]</scope>
</reference>
<geneLocation type="chloroplast"/>
<name>MATK_PINLU</name>